<sequence>MDLFEYQAKELFAKHNVPTTPGRVTDTAEDAKAIAEEIGKPVMVKAQVKVGGRGKAGGVKYAATADDAFTHAQNILGLDIKGHVVKKLLVAEASDIAEEYYISFLLDRANRTYLAMCSVEGGVEIEEVAATKPDRLARIPVDATKGVDEAFAREIAEKGHLPAEVLDAAAVTIAKLWEVFVGEDATLVEVNPLVRTPDDQILALDGKVTLDANADFRHPEHAEFEDRDATDPLELKAKENDLNYVKLDGQVGIIGNGAGLVMSTLDVVAYAGEKHNGVKPANFLDIGGGASAEVMANGLDVILNDSQVKSVFVNVFGGITACDAVANGIVKALEILGEEANKPLVVRLDGNRVEEGRKILADANHPLVVLAQTMDEGADKAAELANK</sequence>
<protein>
    <recommendedName>
        <fullName evidence="1">Succinate--CoA ligase [ADP-forming] subunit beta</fullName>
        <ecNumber evidence="1">6.2.1.5</ecNumber>
    </recommendedName>
    <alternativeName>
        <fullName evidence="1">Succinyl-CoA synthetase subunit beta</fullName>
        <shortName evidence="1">SCS-beta</shortName>
    </alternativeName>
</protein>
<keyword id="KW-0067">ATP-binding</keyword>
<keyword id="KW-0436">Ligase</keyword>
<keyword id="KW-0460">Magnesium</keyword>
<keyword id="KW-0479">Metal-binding</keyword>
<keyword id="KW-0547">Nucleotide-binding</keyword>
<keyword id="KW-0816">Tricarboxylic acid cycle</keyword>
<name>SUCC_MYCSK</name>
<proteinExistence type="inferred from homology"/>
<accession>A1UL96</accession>
<feature type="chain" id="PRO_1000082130" description="Succinate--CoA ligase [ADP-forming] subunit beta">
    <location>
        <begin position="1"/>
        <end position="387"/>
    </location>
</feature>
<feature type="domain" description="ATP-grasp" evidence="1">
    <location>
        <begin position="9"/>
        <end position="236"/>
    </location>
</feature>
<feature type="binding site" evidence="1">
    <location>
        <position position="45"/>
    </location>
    <ligand>
        <name>ATP</name>
        <dbReference type="ChEBI" id="CHEBI:30616"/>
    </ligand>
</feature>
<feature type="binding site" evidence="1">
    <location>
        <begin position="52"/>
        <end position="54"/>
    </location>
    <ligand>
        <name>ATP</name>
        <dbReference type="ChEBI" id="CHEBI:30616"/>
    </ligand>
</feature>
<feature type="binding site" evidence="1">
    <location>
        <position position="94"/>
    </location>
    <ligand>
        <name>ATP</name>
        <dbReference type="ChEBI" id="CHEBI:30616"/>
    </ligand>
</feature>
<feature type="binding site" evidence="1">
    <location>
        <position position="99"/>
    </location>
    <ligand>
        <name>ATP</name>
        <dbReference type="ChEBI" id="CHEBI:30616"/>
    </ligand>
</feature>
<feature type="binding site" evidence="1">
    <location>
        <position position="191"/>
    </location>
    <ligand>
        <name>Mg(2+)</name>
        <dbReference type="ChEBI" id="CHEBI:18420"/>
    </ligand>
</feature>
<feature type="binding site" evidence="1">
    <location>
        <position position="205"/>
    </location>
    <ligand>
        <name>Mg(2+)</name>
        <dbReference type="ChEBI" id="CHEBI:18420"/>
    </ligand>
</feature>
<feature type="binding site" evidence="1">
    <location>
        <position position="256"/>
    </location>
    <ligand>
        <name>substrate</name>
        <note>ligand shared with subunit alpha</note>
    </ligand>
</feature>
<feature type="binding site" evidence="1">
    <location>
        <begin position="318"/>
        <end position="320"/>
    </location>
    <ligand>
        <name>substrate</name>
        <note>ligand shared with subunit alpha</note>
    </ligand>
</feature>
<comment type="function">
    <text evidence="1">Succinyl-CoA synthetase functions in the citric acid cycle (TCA), coupling the hydrolysis of succinyl-CoA to the synthesis of either ATP or GTP and thus represents the only step of substrate-level phosphorylation in the TCA. The beta subunit provides nucleotide specificity of the enzyme and binds the substrate succinate, while the binding sites for coenzyme A and phosphate are found in the alpha subunit.</text>
</comment>
<comment type="catalytic activity">
    <reaction evidence="1">
        <text>succinate + ATP + CoA = succinyl-CoA + ADP + phosphate</text>
        <dbReference type="Rhea" id="RHEA:17661"/>
        <dbReference type="ChEBI" id="CHEBI:30031"/>
        <dbReference type="ChEBI" id="CHEBI:30616"/>
        <dbReference type="ChEBI" id="CHEBI:43474"/>
        <dbReference type="ChEBI" id="CHEBI:57287"/>
        <dbReference type="ChEBI" id="CHEBI:57292"/>
        <dbReference type="ChEBI" id="CHEBI:456216"/>
        <dbReference type="EC" id="6.2.1.5"/>
    </reaction>
    <physiologicalReaction direction="right-to-left" evidence="1">
        <dbReference type="Rhea" id="RHEA:17663"/>
    </physiologicalReaction>
</comment>
<comment type="catalytic activity">
    <reaction evidence="1">
        <text>GTP + succinate + CoA = succinyl-CoA + GDP + phosphate</text>
        <dbReference type="Rhea" id="RHEA:22120"/>
        <dbReference type="ChEBI" id="CHEBI:30031"/>
        <dbReference type="ChEBI" id="CHEBI:37565"/>
        <dbReference type="ChEBI" id="CHEBI:43474"/>
        <dbReference type="ChEBI" id="CHEBI:57287"/>
        <dbReference type="ChEBI" id="CHEBI:57292"/>
        <dbReference type="ChEBI" id="CHEBI:58189"/>
    </reaction>
    <physiologicalReaction direction="right-to-left" evidence="1">
        <dbReference type="Rhea" id="RHEA:22122"/>
    </physiologicalReaction>
</comment>
<comment type="cofactor">
    <cofactor evidence="1">
        <name>Mg(2+)</name>
        <dbReference type="ChEBI" id="CHEBI:18420"/>
    </cofactor>
    <text evidence="1">Binds 1 Mg(2+) ion per subunit.</text>
</comment>
<comment type="pathway">
    <text evidence="1">Carbohydrate metabolism; tricarboxylic acid cycle; succinate from succinyl-CoA (ligase route): step 1/1.</text>
</comment>
<comment type="subunit">
    <text evidence="1">Heterotetramer of two alpha and two beta subunits.</text>
</comment>
<comment type="similarity">
    <text evidence="1">Belongs to the succinate/malate CoA ligase beta subunit family.</text>
</comment>
<reference key="1">
    <citation type="submission" date="2006-12" db="EMBL/GenBank/DDBJ databases">
        <title>Complete sequence of chromosome of Mycobacterium sp. KMS.</title>
        <authorList>
            <consortium name="US DOE Joint Genome Institute"/>
            <person name="Copeland A."/>
            <person name="Lucas S."/>
            <person name="Lapidus A."/>
            <person name="Barry K."/>
            <person name="Detter J.C."/>
            <person name="Glavina del Rio T."/>
            <person name="Hammon N."/>
            <person name="Israni S."/>
            <person name="Dalin E."/>
            <person name="Tice H."/>
            <person name="Pitluck S."/>
            <person name="Kiss H."/>
            <person name="Brettin T."/>
            <person name="Bruce D."/>
            <person name="Han C."/>
            <person name="Tapia R."/>
            <person name="Gilna P."/>
            <person name="Schmutz J."/>
            <person name="Larimer F."/>
            <person name="Land M."/>
            <person name="Hauser L."/>
            <person name="Kyrpides N."/>
            <person name="Mikhailova N."/>
            <person name="Miller C.D."/>
            <person name="Richardson P."/>
        </authorList>
    </citation>
    <scope>NUCLEOTIDE SEQUENCE [LARGE SCALE GENOMIC DNA]</scope>
    <source>
        <strain>KMS</strain>
    </source>
</reference>
<dbReference type="EC" id="6.2.1.5" evidence="1"/>
<dbReference type="EMBL" id="CP000518">
    <property type="protein sequence ID" value="ABL93604.1"/>
    <property type="molecule type" value="Genomic_DNA"/>
</dbReference>
<dbReference type="SMR" id="A1UL96"/>
<dbReference type="STRING" id="189918.Mkms_4413"/>
<dbReference type="KEGG" id="mkm:Mkms_4413"/>
<dbReference type="HOGENOM" id="CLU_037430_0_2_11"/>
<dbReference type="OrthoDB" id="9802602at2"/>
<dbReference type="UniPathway" id="UPA00223">
    <property type="reaction ID" value="UER00999"/>
</dbReference>
<dbReference type="GO" id="GO:0005829">
    <property type="term" value="C:cytosol"/>
    <property type="evidence" value="ECO:0007669"/>
    <property type="project" value="TreeGrafter"/>
</dbReference>
<dbReference type="GO" id="GO:0042709">
    <property type="term" value="C:succinate-CoA ligase complex"/>
    <property type="evidence" value="ECO:0007669"/>
    <property type="project" value="TreeGrafter"/>
</dbReference>
<dbReference type="GO" id="GO:0005524">
    <property type="term" value="F:ATP binding"/>
    <property type="evidence" value="ECO:0007669"/>
    <property type="project" value="UniProtKB-UniRule"/>
</dbReference>
<dbReference type="GO" id="GO:0000287">
    <property type="term" value="F:magnesium ion binding"/>
    <property type="evidence" value="ECO:0007669"/>
    <property type="project" value="UniProtKB-UniRule"/>
</dbReference>
<dbReference type="GO" id="GO:0004775">
    <property type="term" value="F:succinate-CoA ligase (ADP-forming) activity"/>
    <property type="evidence" value="ECO:0007669"/>
    <property type="project" value="UniProtKB-UniRule"/>
</dbReference>
<dbReference type="GO" id="GO:0004776">
    <property type="term" value="F:succinate-CoA ligase (GDP-forming) activity"/>
    <property type="evidence" value="ECO:0007669"/>
    <property type="project" value="RHEA"/>
</dbReference>
<dbReference type="GO" id="GO:0006104">
    <property type="term" value="P:succinyl-CoA metabolic process"/>
    <property type="evidence" value="ECO:0007669"/>
    <property type="project" value="TreeGrafter"/>
</dbReference>
<dbReference type="GO" id="GO:0006099">
    <property type="term" value="P:tricarboxylic acid cycle"/>
    <property type="evidence" value="ECO:0007669"/>
    <property type="project" value="UniProtKB-UniRule"/>
</dbReference>
<dbReference type="FunFam" id="3.30.1490.20:FF:000014">
    <property type="entry name" value="Succinate--CoA ligase [ADP-forming] subunit beta"/>
    <property type="match status" value="1"/>
</dbReference>
<dbReference type="FunFam" id="3.30.470.20:FF:000002">
    <property type="entry name" value="Succinate--CoA ligase [ADP-forming] subunit beta"/>
    <property type="match status" value="1"/>
</dbReference>
<dbReference type="FunFam" id="3.40.50.261:FF:000007">
    <property type="entry name" value="Succinate--CoA ligase [ADP-forming] subunit beta"/>
    <property type="match status" value="1"/>
</dbReference>
<dbReference type="Gene3D" id="3.30.1490.20">
    <property type="entry name" value="ATP-grasp fold, A domain"/>
    <property type="match status" value="1"/>
</dbReference>
<dbReference type="Gene3D" id="3.30.470.20">
    <property type="entry name" value="ATP-grasp fold, B domain"/>
    <property type="match status" value="1"/>
</dbReference>
<dbReference type="Gene3D" id="3.40.50.261">
    <property type="entry name" value="Succinyl-CoA synthetase domains"/>
    <property type="match status" value="1"/>
</dbReference>
<dbReference type="HAMAP" id="MF_00558">
    <property type="entry name" value="Succ_CoA_beta"/>
    <property type="match status" value="1"/>
</dbReference>
<dbReference type="InterPro" id="IPR011761">
    <property type="entry name" value="ATP-grasp"/>
</dbReference>
<dbReference type="InterPro" id="IPR013650">
    <property type="entry name" value="ATP-grasp_succ-CoA_synth-type"/>
</dbReference>
<dbReference type="InterPro" id="IPR013815">
    <property type="entry name" value="ATP_grasp_subdomain_1"/>
</dbReference>
<dbReference type="InterPro" id="IPR017866">
    <property type="entry name" value="Succ-CoA_synthase_bsu_CS"/>
</dbReference>
<dbReference type="InterPro" id="IPR005811">
    <property type="entry name" value="SUCC_ACL_C"/>
</dbReference>
<dbReference type="InterPro" id="IPR005809">
    <property type="entry name" value="Succ_CoA_ligase-like_bsu"/>
</dbReference>
<dbReference type="InterPro" id="IPR016102">
    <property type="entry name" value="Succinyl-CoA_synth-like"/>
</dbReference>
<dbReference type="NCBIfam" id="NF001913">
    <property type="entry name" value="PRK00696.1"/>
    <property type="match status" value="1"/>
</dbReference>
<dbReference type="NCBIfam" id="TIGR01016">
    <property type="entry name" value="sucCoAbeta"/>
    <property type="match status" value="1"/>
</dbReference>
<dbReference type="PANTHER" id="PTHR11815:SF10">
    <property type="entry name" value="SUCCINATE--COA LIGASE [GDP-FORMING] SUBUNIT BETA, MITOCHONDRIAL"/>
    <property type="match status" value="1"/>
</dbReference>
<dbReference type="PANTHER" id="PTHR11815">
    <property type="entry name" value="SUCCINYL-COA SYNTHETASE BETA CHAIN"/>
    <property type="match status" value="1"/>
</dbReference>
<dbReference type="Pfam" id="PF08442">
    <property type="entry name" value="ATP-grasp_2"/>
    <property type="match status" value="1"/>
</dbReference>
<dbReference type="Pfam" id="PF00549">
    <property type="entry name" value="Ligase_CoA"/>
    <property type="match status" value="1"/>
</dbReference>
<dbReference type="PIRSF" id="PIRSF001554">
    <property type="entry name" value="SucCS_beta"/>
    <property type="match status" value="1"/>
</dbReference>
<dbReference type="SUPFAM" id="SSF56059">
    <property type="entry name" value="Glutathione synthetase ATP-binding domain-like"/>
    <property type="match status" value="1"/>
</dbReference>
<dbReference type="SUPFAM" id="SSF52210">
    <property type="entry name" value="Succinyl-CoA synthetase domains"/>
    <property type="match status" value="1"/>
</dbReference>
<dbReference type="PROSITE" id="PS50975">
    <property type="entry name" value="ATP_GRASP"/>
    <property type="match status" value="1"/>
</dbReference>
<dbReference type="PROSITE" id="PS01217">
    <property type="entry name" value="SUCCINYL_COA_LIG_3"/>
    <property type="match status" value="1"/>
</dbReference>
<organism>
    <name type="scientific">Mycobacterium sp. (strain KMS)</name>
    <dbReference type="NCBI Taxonomy" id="189918"/>
    <lineage>
        <taxon>Bacteria</taxon>
        <taxon>Bacillati</taxon>
        <taxon>Actinomycetota</taxon>
        <taxon>Actinomycetes</taxon>
        <taxon>Mycobacteriales</taxon>
        <taxon>Mycobacteriaceae</taxon>
        <taxon>Mycobacterium</taxon>
    </lineage>
</organism>
<gene>
    <name evidence="1" type="primary">sucC</name>
    <name type="ordered locus">Mkms_4413</name>
</gene>
<evidence type="ECO:0000255" key="1">
    <source>
        <dbReference type="HAMAP-Rule" id="MF_00558"/>
    </source>
</evidence>